<accession>Q7N157</accession>
<proteinExistence type="inferred from homology"/>
<feature type="chain" id="PRO_0000211713" description="DNA gyrase inhibitor YacG">
    <location>
        <begin position="1"/>
        <end position="65"/>
    </location>
</feature>
<feature type="region of interest" description="Disordered" evidence="2">
    <location>
        <begin position="43"/>
        <end position="65"/>
    </location>
</feature>
<feature type="binding site" evidence="1">
    <location>
        <position position="9"/>
    </location>
    <ligand>
        <name>Zn(2+)</name>
        <dbReference type="ChEBI" id="CHEBI:29105"/>
    </ligand>
</feature>
<feature type="binding site" evidence="1">
    <location>
        <position position="12"/>
    </location>
    <ligand>
        <name>Zn(2+)</name>
        <dbReference type="ChEBI" id="CHEBI:29105"/>
    </ligand>
</feature>
<feature type="binding site" evidence="1">
    <location>
        <position position="28"/>
    </location>
    <ligand>
        <name>Zn(2+)</name>
        <dbReference type="ChEBI" id="CHEBI:29105"/>
    </ligand>
</feature>
<feature type="binding site" evidence="1">
    <location>
        <position position="32"/>
    </location>
    <ligand>
        <name>Zn(2+)</name>
        <dbReference type="ChEBI" id="CHEBI:29105"/>
    </ligand>
</feature>
<reference key="1">
    <citation type="journal article" date="2003" name="Nat. Biotechnol.">
        <title>The genome sequence of the entomopathogenic bacterium Photorhabdus luminescens.</title>
        <authorList>
            <person name="Duchaud E."/>
            <person name="Rusniok C."/>
            <person name="Frangeul L."/>
            <person name="Buchrieser C."/>
            <person name="Givaudan A."/>
            <person name="Taourit S."/>
            <person name="Bocs S."/>
            <person name="Boursaux-Eude C."/>
            <person name="Chandler M."/>
            <person name="Charles J.-F."/>
            <person name="Dassa E."/>
            <person name="Derose R."/>
            <person name="Derzelle S."/>
            <person name="Freyssinet G."/>
            <person name="Gaudriault S."/>
            <person name="Medigue C."/>
            <person name="Lanois A."/>
            <person name="Powell K."/>
            <person name="Siguier P."/>
            <person name="Vincent R."/>
            <person name="Wingate V."/>
            <person name="Zouine M."/>
            <person name="Glaser P."/>
            <person name="Boemare N."/>
            <person name="Danchin A."/>
            <person name="Kunst F."/>
        </authorList>
    </citation>
    <scope>NUCLEOTIDE SEQUENCE [LARGE SCALE GENOMIC DNA]</scope>
    <source>
        <strain>DSM 15139 / CIP 105565 / TT01</strain>
    </source>
</reference>
<sequence length="65" mass="7405">MSELLTIECPTCGKTVVWGEISPYRPFCSKRCQLIDLGQWANEEKRIPSQSENSDSDDWSGQPEQ</sequence>
<name>YACG_PHOLL</name>
<keyword id="KW-0479">Metal-binding</keyword>
<keyword id="KW-1185">Reference proteome</keyword>
<keyword id="KW-0862">Zinc</keyword>
<dbReference type="EMBL" id="BX571871">
    <property type="protein sequence ID" value="CAE16016.1"/>
    <property type="molecule type" value="Genomic_DNA"/>
</dbReference>
<dbReference type="RefSeq" id="WP_011147806.1">
    <property type="nucleotide sequence ID" value="NC_005126.1"/>
</dbReference>
<dbReference type="SMR" id="Q7N157"/>
<dbReference type="STRING" id="243265.plu3643"/>
<dbReference type="GeneID" id="48849886"/>
<dbReference type="KEGG" id="plu:plu3643"/>
<dbReference type="eggNOG" id="COG3024">
    <property type="taxonomic scope" value="Bacteria"/>
</dbReference>
<dbReference type="HOGENOM" id="CLU_178280_3_1_6"/>
<dbReference type="OrthoDB" id="9809663at2"/>
<dbReference type="Proteomes" id="UP000002514">
    <property type="component" value="Chromosome"/>
</dbReference>
<dbReference type="GO" id="GO:0008657">
    <property type="term" value="F:DNA topoisomerase type II (double strand cut, ATP-hydrolyzing) inhibitor activity"/>
    <property type="evidence" value="ECO:0007669"/>
    <property type="project" value="UniProtKB-UniRule"/>
</dbReference>
<dbReference type="GO" id="GO:0008270">
    <property type="term" value="F:zinc ion binding"/>
    <property type="evidence" value="ECO:0007669"/>
    <property type="project" value="UniProtKB-UniRule"/>
</dbReference>
<dbReference type="GO" id="GO:0006355">
    <property type="term" value="P:regulation of DNA-templated transcription"/>
    <property type="evidence" value="ECO:0007669"/>
    <property type="project" value="InterPro"/>
</dbReference>
<dbReference type="Gene3D" id="3.30.50.10">
    <property type="entry name" value="Erythroid Transcription Factor GATA-1, subunit A"/>
    <property type="match status" value="1"/>
</dbReference>
<dbReference type="HAMAP" id="MF_00649">
    <property type="entry name" value="DNA_gyrase_inhibitor_YacG"/>
    <property type="match status" value="1"/>
</dbReference>
<dbReference type="InterPro" id="IPR005584">
    <property type="entry name" value="DNA_gyrase_inhibitor_YacG"/>
</dbReference>
<dbReference type="InterPro" id="IPR013088">
    <property type="entry name" value="Znf_NHR/GATA"/>
</dbReference>
<dbReference type="NCBIfam" id="NF001638">
    <property type="entry name" value="PRK00418.1"/>
    <property type="match status" value="1"/>
</dbReference>
<dbReference type="PANTHER" id="PTHR36150">
    <property type="entry name" value="DNA GYRASE INHIBITOR YACG"/>
    <property type="match status" value="1"/>
</dbReference>
<dbReference type="PANTHER" id="PTHR36150:SF1">
    <property type="entry name" value="DNA GYRASE INHIBITOR YACG"/>
    <property type="match status" value="1"/>
</dbReference>
<dbReference type="Pfam" id="PF03884">
    <property type="entry name" value="YacG"/>
    <property type="match status" value="1"/>
</dbReference>
<dbReference type="SUPFAM" id="SSF57716">
    <property type="entry name" value="Glucocorticoid receptor-like (DNA-binding domain)"/>
    <property type="match status" value="1"/>
</dbReference>
<organism>
    <name type="scientific">Photorhabdus laumondii subsp. laumondii (strain DSM 15139 / CIP 105565 / TT01)</name>
    <name type="common">Photorhabdus luminescens subsp. laumondii</name>
    <dbReference type="NCBI Taxonomy" id="243265"/>
    <lineage>
        <taxon>Bacteria</taxon>
        <taxon>Pseudomonadati</taxon>
        <taxon>Pseudomonadota</taxon>
        <taxon>Gammaproteobacteria</taxon>
        <taxon>Enterobacterales</taxon>
        <taxon>Morganellaceae</taxon>
        <taxon>Photorhabdus</taxon>
    </lineage>
</organism>
<gene>
    <name evidence="1" type="primary">yacG</name>
    <name type="ordered locus">plu3643</name>
</gene>
<protein>
    <recommendedName>
        <fullName evidence="1">DNA gyrase inhibitor YacG</fullName>
    </recommendedName>
</protein>
<comment type="function">
    <text evidence="1">Inhibits all the catalytic activities of DNA gyrase by preventing its interaction with DNA. Acts by binding directly to the C-terminal domain of GyrB, which probably disrupts DNA binding by the gyrase.</text>
</comment>
<comment type="cofactor">
    <cofactor evidence="1">
        <name>Zn(2+)</name>
        <dbReference type="ChEBI" id="CHEBI:29105"/>
    </cofactor>
    <text evidence="1">Binds 1 zinc ion.</text>
</comment>
<comment type="subunit">
    <text evidence="1">Interacts with GyrB.</text>
</comment>
<comment type="similarity">
    <text evidence="1">Belongs to the DNA gyrase inhibitor YacG family.</text>
</comment>
<evidence type="ECO:0000255" key="1">
    <source>
        <dbReference type="HAMAP-Rule" id="MF_00649"/>
    </source>
</evidence>
<evidence type="ECO:0000256" key="2">
    <source>
        <dbReference type="SAM" id="MobiDB-lite"/>
    </source>
</evidence>